<feature type="chain" id="PRO_0000094023" description="ECF RNA polymerase sigma factor SigD">
    <location>
        <begin position="1"/>
        <end position="212"/>
    </location>
</feature>
<feature type="DNA-binding region" description="H-T-H motif" evidence="1">
    <location>
        <begin position="176"/>
        <end position="195"/>
    </location>
</feature>
<feature type="region of interest" description="Sigma-70 factor domain-2">
    <location>
        <begin position="49"/>
        <end position="119"/>
    </location>
</feature>
<feature type="region of interest" description="Sigma-70 factor domain-4">
    <location>
        <begin position="152"/>
        <end position="201"/>
    </location>
</feature>
<feature type="short sequence motif" description="Polymerase core binding" evidence="2">
    <location>
        <begin position="75"/>
        <end position="78"/>
    </location>
</feature>
<feature type="helix" evidence="8">
    <location>
        <begin position="147"/>
        <end position="155"/>
    </location>
</feature>
<feature type="helix" evidence="8">
    <location>
        <begin position="160"/>
        <end position="170"/>
    </location>
</feature>
<feature type="helix" evidence="8">
    <location>
        <begin position="176"/>
        <end position="183"/>
    </location>
</feature>
<feature type="helix" evidence="8">
    <location>
        <begin position="187"/>
        <end position="206"/>
    </location>
</feature>
<protein>
    <recommendedName>
        <fullName>ECF RNA polymerase sigma factor SigD</fullName>
        <shortName>ECF sigma factor SigD</shortName>
    </recommendedName>
    <alternativeName>
        <fullName>Alternative RNA polymerase sigma factor SigD</fullName>
    </alternativeName>
    <alternativeName>
        <fullName>RNA polymerase sigma-D factor</fullName>
    </alternativeName>
    <alternativeName>
        <fullName>Sigma-D factor</fullName>
    </alternativeName>
</protein>
<evidence type="ECO:0000250" key="1"/>
<evidence type="ECO:0000255" key="2"/>
<evidence type="ECO:0000269" key="3">
    <source>
    </source>
</evidence>
<evidence type="ECO:0000269" key="4">
    <source>
    </source>
</evidence>
<evidence type="ECO:0000269" key="5">
    <source>
    </source>
</evidence>
<evidence type="ECO:0000269" key="6">
    <source>
    </source>
</evidence>
<evidence type="ECO:0000305" key="7"/>
<evidence type="ECO:0007829" key="8">
    <source>
        <dbReference type="PDB" id="3VFZ"/>
    </source>
</evidence>
<organism>
    <name type="scientific">Mycobacterium tuberculosis (strain ATCC 25618 / H37Rv)</name>
    <dbReference type="NCBI Taxonomy" id="83332"/>
    <lineage>
        <taxon>Bacteria</taxon>
        <taxon>Bacillati</taxon>
        <taxon>Actinomycetota</taxon>
        <taxon>Actinomycetes</taxon>
        <taxon>Mycobacteriales</taxon>
        <taxon>Mycobacteriaceae</taxon>
        <taxon>Mycobacterium</taxon>
        <taxon>Mycobacterium tuberculosis complex</taxon>
    </lineage>
</organism>
<name>RPSD_MYCTU</name>
<proteinExistence type="evidence at protein level"/>
<accession>P9WGG9</accession>
<accession>L0TFB3</accession>
<accession>P66811</accession>
<accession>Q50712</accession>
<gene>
    <name type="primary">sigD</name>
    <name type="ordered locus">Rv3414c</name>
    <name type="ORF">MTCY78.15</name>
</gene>
<keyword id="KW-0002">3D-structure</keyword>
<keyword id="KW-0238">DNA-binding</keyword>
<keyword id="KW-1185">Reference proteome</keyword>
<keyword id="KW-0731">Sigma factor</keyword>
<keyword id="KW-0804">Transcription</keyword>
<keyword id="KW-0805">Transcription regulation</keyword>
<keyword id="KW-0843">Virulence</keyword>
<comment type="function">
    <text evidence="4">Sigma factors are initiation factors that promote the attachment of RNA polymerase to specific initiation sites and are then released. Extracytoplasmic function (ECF) sigma factors are held in an inactive form by an anti-sigma factor until released by regulated intramembrane proteolysis.</text>
</comment>
<comment type="subunit">
    <text evidence="5 6">Interacts transiently with the RNA polymerase catalytic core formed by RpoA, RpoB, RpoC and RpoZ (2 alpha, 1 beta, 1 beta' and 1 omega subunit) to form the RNA polymerase holoenzyme that can initiate transcription. Interacts (via sigma-70 factor domain 4) with RsdA.</text>
</comment>
<comment type="induction">
    <text evidence="3 4">Positively autoregulates, probably directly, expressed at a relatively high level throughout exponential growth and during stationary phase. Expression decreases during O(2) depletion (hypoxia) (PubMed:15375142) and after heat shock (5-fold, 45 degrees Celsius) (PubMed:10027986).</text>
</comment>
<comment type="domain">
    <text evidence="1">The sigma-70 factor domain-2 mediates sequence-specific interaction with the -10 element in promoter DNA, and plays an important role in melting the double-stranded DNA and the formation of the transcription bubble. The sigma-70 factor domain-2 mediates interaction with the RNA polymerase subunits RpoB and RpoC (By similarity).</text>
</comment>
<comment type="domain">
    <text evidence="1">The sigma-70 factor domain-4 contains a helix-turn-helix (H-T-H) motif that mediates interaction with the -35 element in promoter DNA. The domain also mediates interaction with the RNA polymerase subunit RpoA. Interactions between sigma-70 factor domain-4 and anti-sigma factors prevents interaction of sigma factors with the RNA polymerase catalytic core (By similarity).</text>
</comment>
<comment type="disruption phenotype">
    <text evidence="4">Not essential for growth in culture. Upon disruption about 260 genes show significantly decreased expression while about 200 showed increased expression. BALB/c mice infected with the disruption mutant showed a moderate but significant decrease in virulence, surviving about 30% longer than wild-type.</text>
</comment>
<comment type="miscellaneous">
    <text evidence="7">Extracytoplasmic function sigma factors (ECF) are held in an inactive form by an anti-sigma factor until released by regulated intramembrane proteolysis (RIP). RIP occurs when an extracytoplasmic signal triggers a concerted proteolytic cascade to transmit information and elicit cellular responses. The membrane-spanning anti-sigma factor is first cut extracytoplasmically (site-1 protease, S1P), then within the membrane itself (site-2 protease, S2P), while cytoplasmic proteases finish degrading the regulatory protein, liberating SigD (Probable).</text>
</comment>
<comment type="similarity">
    <text evidence="7">Belongs to the sigma-70 factor family. ECF subfamily.</text>
</comment>
<reference key="1">
    <citation type="journal article" date="1998" name="Nature">
        <title>Deciphering the biology of Mycobacterium tuberculosis from the complete genome sequence.</title>
        <authorList>
            <person name="Cole S.T."/>
            <person name="Brosch R."/>
            <person name="Parkhill J."/>
            <person name="Garnier T."/>
            <person name="Churcher C.M."/>
            <person name="Harris D.E."/>
            <person name="Gordon S.V."/>
            <person name="Eiglmeier K."/>
            <person name="Gas S."/>
            <person name="Barry C.E. III"/>
            <person name="Tekaia F."/>
            <person name="Badcock K."/>
            <person name="Basham D."/>
            <person name="Brown D."/>
            <person name="Chillingworth T."/>
            <person name="Connor R."/>
            <person name="Davies R.M."/>
            <person name="Devlin K."/>
            <person name="Feltwell T."/>
            <person name="Gentles S."/>
            <person name="Hamlin N."/>
            <person name="Holroyd S."/>
            <person name="Hornsby T."/>
            <person name="Jagels K."/>
            <person name="Krogh A."/>
            <person name="McLean J."/>
            <person name="Moule S."/>
            <person name="Murphy L.D."/>
            <person name="Oliver S."/>
            <person name="Osborne J."/>
            <person name="Quail M.A."/>
            <person name="Rajandream M.A."/>
            <person name="Rogers J."/>
            <person name="Rutter S."/>
            <person name="Seeger K."/>
            <person name="Skelton S."/>
            <person name="Squares S."/>
            <person name="Squares R."/>
            <person name="Sulston J.E."/>
            <person name="Taylor K."/>
            <person name="Whitehead S."/>
            <person name="Barrell B.G."/>
        </authorList>
    </citation>
    <scope>NUCLEOTIDE SEQUENCE [LARGE SCALE GENOMIC DNA]</scope>
    <source>
        <strain>ATCC 25618 / H37Rv</strain>
    </source>
</reference>
<reference key="2">
    <citation type="journal article" date="1999" name="Mol. Microbiol.">
        <title>Differential expression of 10 sigma factor genes in Mycobacterium tuberculosis.</title>
        <authorList>
            <person name="Manganelli R."/>
            <person name="Dubnau E."/>
            <person name="Tyagi S."/>
            <person name="Kramer F.R."/>
            <person name="Smith I."/>
        </authorList>
    </citation>
    <scope>INDUCTION</scope>
    <source>
        <strain>ATCC 25618 / H37Rv</strain>
    </source>
</reference>
<reference key="3">
    <citation type="journal article" date="2004" name="J. Bacteriol.">
        <title>Transcription regulation by the Mycobacterium tuberculosis alternative sigma factor SigD and its role in virulence.</title>
        <authorList>
            <person name="Raman S."/>
            <person name="Hazra R."/>
            <person name="Dascher C.C."/>
            <person name="Husson R.N."/>
        </authorList>
    </citation>
    <scope>FUNCTION</scope>
    <scope>INDUCTION</scope>
    <scope>DISRUPTION PHENOTYPE</scope>
    <source>
        <strain>ATCC 25618 / H37Rv</strain>
    </source>
</reference>
<reference key="4">
    <citation type="journal article" date="2010" name="Protein Expr. Purif.">
        <title>Over-expression and purification strategies for recombinant multi-protein oligomers: a case study of Mycobacterium tuberculosis sigma/anti-sigma factor protein complexes.</title>
        <authorList>
            <person name="Thakur K.G."/>
            <person name="Jaiswal R.K."/>
            <person name="Shukla J.K."/>
            <person name="Praveena T."/>
            <person name="Gopal B."/>
        </authorList>
    </citation>
    <scope>INTERACTION WITH ANTI-SIGMA FACTOR RSDA</scope>
</reference>
<reference key="5">
    <citation type="journal article" date="2011" name="Mol. Cell. Proteomics">
        <title>Proteogenomic analysis of Mycobacterium tuberculosis by high resolution mass spectrometry.</title>
        <authorList>
            <person name="Kelkar D.S."/>
            <person name="Kumar D."/>
            <person name="Kumar P."/>
            <person name="Balakrishnan L."/>
            <person name="Muthusamy B."/>
            <person name="Yadav A.K."/>
            <person name="Shrivastava P."/>
            <person name="Marimuthu A."/>
            <person name="Anand S."/>
            <person name="Sundaram H."/>
            <person name="Kingsbury R."/>
            <person name="Harsha H.C."/>
            <person name="Nair B."/>
            <person name="Prasad T.S."/>
            <person name="Chauhan D.S."/>
            <person name="Katoch K."/>
            <person name="Katoch V.M."/>
            <person name="Kumar P."/>
            <person name="Chaerkady R."/>
            <person name="Ramachandran S."/>
            <person name="Dash D."/>
            <person name="Pandey A."/>
        </authorList>
    </citation>
    <scope>IDENTIFICATION BY MASS SPECTROMETRY [LARGE SCALE ANALYSIS]</scope>
    <source>
        <strain>ATCC 25618 / H37Rv</strain>
    </source>
</reference>
<reference key="6">
    <citation type="journal article" date="2013" name="Nucleic Acids Res.">
        <title>Mycobacterium tuberculosis RsdA provides a conformational rationale for selective regulation of sigma-factor activity by proteolysis.</title>
        <authorList>
            <person name="Jaiswal R.K."/>
            <person name="Prabha T.S."/>
            <person name="Manjeera G."/>
            <person name="Gopal B."/>
        </authorList>
    </citation>
    <scope>X-RAY CRYSTALLOGRAPHY (1.9 ANGSTROMS) OF 141-212 IN COMPLEX WITH RSDA</scope>
    <scope>SUBUNIT</scope>
    <source>
        <strain>ATCC 25618 / H37Rv</strain>
    </source>
</reference>
<dbReference type="EMBL" id="AL123456">
    <property type="protein sequence ID" value="CCP46236.1"/>
    <property type="molecule type" value="Genomic_DNA"/>
</dbReference>
<dbReference type="PIR" id="C70737">
    <property type="entry name" value="C70737"/>
</dbReference>
<dbReference type="RefSeq" id="NP_217931.1">
    <property type="nucleotide sequence ID" value="NC_000962.3"/>
</dbReference>
<dbReference type="RefSeq" id="WP_003418013.1">
    <property type="nucleotide sequence ID" value="NC_000962.3"/>
</dbReference>
<dbReference type="PDB" id="3VEP">
    <property type="method" value="X-ray"/>
    <property type="resolution" value="2.50 A"/>
    <property type="chains" value="A/D/E/H=141-212"/>
</dbReference>
<dbReference type="PDB" id="3VFZ">
    <property type="method" value="X-ray"/>
    <property type="resolution" value="1.90 A"/>
    <property type="chains" value="A/B=141-212"/>
</dbReference>
<dbReference type="PDBsum" id="3VEP"/>
<dbReference type="PDBsum" id="3VFZ"/>
<dbReference type="SMR" id="P9WGG9"/>
<dbReference type="STRING" id="83332.Rv3414c"/>
<dbReference type="PaxDb" id="83332-Rv3414c"/>
<dbReference type="DNASU" id="887594"/>
<dbReference type="GeneID" id="887594"/>
<dbReference type="KEGG" id="mtu:Rv3414c"/>
<dbReference type="KEGG" id="mtv:RVBD_3414c"/>
<dbReference type="PATRIC" id="fig|83332.111.peg.3804"/>
<dbReference type="TubercuList" id="Rv3414c"/>
<dbReference type="eggNOG" id="COG1595">
    <property type="taxonomic scope" value="Bacteria"/>
</dbReference>
<dbReference type="InParanoid" id="P9WGG9"/>
<dbReference type="OrthoDB" id="160825at2"/>
<dbReference type="PhylomeDB" id="P9WGG9"/>
<dbReference type="EvolutionaryTrace" id="P9WGG9"/>
<dbReference type="Proteomes" id="UP000001584">
    <property type="component" value="Chromosome"/>
</dbReference>
<dbReference type="GO" id="GO:0003677">
    <property type="term" value="F:DNA binding"/>
    <property type="evidence" value="ECO:0007669"/>
    <property type="project" value="UniProtKB-KW"/>
</dbReference>
<dbReference type="GO" id="GO:0016987">
    <property type="term" value="F:sigma factor activity"/>
    <property type="evidence" value="ECO:0000315"/>
    <property type="project" value="MTBBASE"/>
</dbReference>
<dbReference type="GO" id="GO:0006352">
    <property type="term" value="P:DNA-templated transcription initiation"/>
    <property type="evidence" value="ECO:0007669"/>
    <property type="project" value="InterPro"/>
</dbReference>
<dbReference type="GO" id="GO:0006355">
    <property type="term" value="P:regulation of DNA-templated transcription"/>
    <property type="evidence" value="ECO:0000318"/>
    <property type="project" value="GO_Central"/>
</dbReference>
<dbReference type="GO" id="GO:0009408">
    <property type="term" value="P:response to heat"/>
    <property type="evidence" value="ECO:0000270"/>
    <property type="project" value="MTBBASE"/>
</dbReference>
<dbReference type="CDD" id="cd06171">
    <property type="entry name" value="Sigma70_r4"/>
    <property type="match status" value="1"/>
</dbReference>
<dbReference type="FunFam" id="1.10.10.10:FF:000584">
    <property type="entry name" value="RNA polymerase sigma factor"/>
    <property type="match status" value="1"/>
</dbReference>
<dbReference type="FunFam" id="1.10.1740.10:FF:000022">
    <property type="entry name" value="RNA polymerase sigma factor"/>
    <property type="match status" value="1"/>
</dbReference>
<dbReference type="Gene3D" id="1.10.1740.10">
    <property type="match status" value="1"/>
</dbReference>
<dbReference type="Gene3D" id="1.10.10.10">
    <property type="entry name" value="Winged helix-like DNA-binding domain superfamily/Winged helix DNA-binding domain"/>
    <property type="match status" value="1"/>
</dbReference>
<dbReference type="InterPro" id="IPR039425">
    <property type="entry name" value="RNA_pol_sigma-70-like"/>
</dbReference>
<dbReference type="InterPro" id="IPR014284">
    <property type="entry name" value="RNA_pol_sigma-70_dom"/>
</dbReference>
<dbReference type="InterPro" id="IPR000838">
    <property type="entry name" value="RNA_pol_sigma70_ECF_CS"/>
</dbReference>
<dbReference type="InterPro" id="IPR007627">
    <property type="entry name" value="RNA_pol_sigma70_r2"/>
</dbReference>
<dbReference type="InterPro" id="IPR013249">
    <property type="entry name" value="RNA_pol_sigma70_r4_t2"/>
</dbReference>
<dbReference type="InterPro" id="IPR013325">
    <property type="entry name" value="RNA_pol_sigma_r2"/>
</dbReference>
<dbReference type="InterPro" id="IPR013324">
    <property type="entry name" value="RNA_pol_sigma_r3/r4-like"/>
</dbReference>
<dbReference type="InterPro" id="IPR036388">
    <property type="entry name" value="WH-like_DNA-bd_sf"/>
</dbReference>
<dbReference type="NCBIfam" id="NF007230">
    <property type="entry name" value="PRK09648.1"/>
    <property type="match status" value="1"/>
</dbReference>
<dbReference type="NCBIfam" id="TIGR02937">
    <property type="entry name" value="sigma70-ECF"/>
    <property type="match status" value="1"/>
</dbReference>
<dbReference type="PANTHER" id="PTHR43133:SF58">
    <property type="entry name" value="ECF RNA POLYMERASE SIGMA FACTOR SIGD"/>
    <property type="match status" value="1"/>
</dbReference>
<dbReference type="PANTHER" id="PTHR43133">
    <property type="entry name" value="RNA POLYMERASE ECF-TYPE SIGMA FACTO"/>
    <property type="match status" value="1"/>
</dbReference>
<dbReference type="Pfam" id="PF04542">
    <property type="entry name" value="Sigma70_r2"/>
    <property type="match status" value="1"/>
</dbReference>
<dbReference type="Pfam" id="PF08281">
    <property type="entry name" value="Sigma70_r4_2"/>
    <property type="match status" value="1"/>
</dbReference>
<dbReference type="SUPFAM" id="SSF88946">
    <property type="entry name" value="Sigma2 domain of RNA polymerase sigma factors"/>
    <property type="match status" value="1"/>
</dbReference>
<dbReference type="SUPFAM" id="SSF88659">
    <property type="entry name" value="Sigma3 and sigma4 domains of RNA polymerase sigma factors"/>
    <property type="match status" value="1"/>
</dbReference>
<dbReference type="PROSITE" id="PS01063">
    <property type="entry name" value="SIGMA70_ECF"/>
    <property type="match status" value="1"/>
</dbReference>
<sequence>MVDPGVSPGCVRFVTLEISPSMTMQGERLDAVVAEAVAGDRNALREVLETIRPIVVRYCRARVGTVERSGLSADDVAQEVCLATITALPRYRDRGRPFLAFLYGIAAHKVADAHRAAGRDRAYPAETLPERWSADAGPEQMAIEADSVTRMNELLEILPAKQREILILRVVVGLSAEETAAAVGSTTGAVRVAQHRALQRLKDEIVAAGDYA</sequence>